<comment type="function">
    <text evidence="1">Converts heme B (protoheme IX) to heme O by substitution of the vinyl group on carbon 2 of heme B porphyrin ring with a hydroxyethyl farnesyl side group.</text>
</comment>
<comment type="catalytic activity">
    <reaction evidence="1">
        <text>heme b + (2E,6E)-farnesyl diphosphate + H2O = Fe(II)-heme o + diphosphate</text>
        <dbReference type="Rhea" id="RHEA:28070"/>
        <dbReference type="ChEBI" id="CHEBI:15377"/>
        <dbReference type="ChEBI" id="CHEBI:33019"/>
        <dbReference type="ChEBI" id="CHEBI:60344"/>
        <dbReference type="ChEBI" id="CHEBI:60530"/>
        <dbReference type="ChEBI" id="CHEBI:175763"/>
        <dbReference type="EC" id="2.5.1.141"/>
    </reaction>
</comment>
<comment type="pathway">
    <text evidence="1">Porphyrin-containing compound metabolism; heme O biosynthesis; heme O from protoheme: step 1/1.</text>
</comment>
<comment type="subcellular location">
    <subcellularLocation>
        <location evidence="1">Cell inner membrane</location>
        <topology evidence="1">Multi-pass membrane protein</topology>
    </subcellularLocation>
</comment>
<comment type="miscellaneous">
    <text evidence="1">Carbon 2 of the heme B porphyrin ring is defined according to the Fischer nomenclature.</text>
</comment>
<comment type="similarity">
    <text evidence="1">Belongs to the UbiA prenyltransferase family. Protoheme IX farnesyltransferase subfamily.</text>
</comment>
<accession>B1YN86</accession>
<name>COXX_BURA4</name>
<proteinExistence type="inferred from homology"/>
<reference key="1">
    <citation type="submission" date="2008-04" db="EMBL/GenBank/DDBJ databases">
        <title>Complete sequence of chromosome 1 of Burkholderia ambifaria MC40-6.</title>
        <authorList>
            <person name="Copeland A."/>
            <person name="Lucas S."/>
            <person name="Lapidus A."/>
            <person name="Glavina del Rio T."/>
            <person name="Dalin E."/>
            <person name="Tice H."/>
            <person name="Pitluck S."/>
            <person name="Chain P."/>
            <person name="Malfatti S."/>
            <person name="Shin M."/>
            <person name="Vergez L."/>
            <person name="Lang D."/>
            <person name="Schmutz J."/>
            <person name="Larimer F."/>
            <person name="Land M."/>
            <person name="Hauser L."/>
            <person name="Kyrpides N."/>
            <person name="Lykidis A."/>
            <person name="Ramette A."/>
            <person name="Konstantinidis K."/>
            <person name="Tiedje J."/>
            <person name="Richardson P."/>
        </authorList>
    </citation>
    <scope>NUCLEOTIDE SEQUENCE [LARGE SCALE GENOMIC DNA]</scope>
    <source>
        <strain>MC40-6</strain>
    </source>
</reference>
<organism>
    <name type="scientific">Burkholderia ambifaria (strain MC40-6)</name>
    <dbReference type="NCBI Taxonomy" id="398577"/>
    <lineage>
        <taxon>Bacteria</taxon>
        <taxon>Pseudomonadati</taxon>
        <taxon>Pseudomonadota</taxon>
        <taxon>Betaproteobacteria</taxon>
        <taxon>Burkholderiales</taxon>
        <taxon>Burkholderiaceae</taxon>
        <taxon>Burkholderia</taxon>
        <taxon>Burkholderia cepacia complex</taxon>
    </lineage>
</organism>
<sequence>MQSTLSQSPGSRFSQYMALTKPRVTQLAVFCAVIGMFLATPGMVPWHVLIGGTIGIWLLAGAAFAINCLVEQKIDAMMRRTAWRPSARGEITTPQILLFSAVLGSAGAWTLYTFTNPLTMWLTIATFVGYAVVYTLLLKPMTPQNIVIGGASGAMPPALGWAAVTGAVPGDAWILVLIIFVWTPPHFWVLALYRRKDYENAGLPMLPVTHGEKFTRLHILLYTVILFAVTLMPFISGMSGVVYLASAVLLGAVFLAYAWKIYRDYSDELARKAFRYSIVYLSLLFAALLVDHYARPLLGV</sequence>
<gene>
    <name evidence="1" type="primary">ctaB</name>
    <name type="ordered locus">BamMC406_2754</name>
</gene>
<protein>
    <recommendedName>
        <fullName evidence="1">Protoheme IX farnesyltransferase</fullName>
        <ecNumber evidence="1">2.5.1.141</ecNumber>
    </recommendedName>
    <alternativeName>
        <fullName evidence="1">Heme B farnesyltransferase</fullName>
    </alternativeName>
    <alternativeName>
        <fullName evidence="1">Heme O synthase</fullName>
    </alternativeName>
</protein>
<evidence type="ECO:0000255" key="1">
    <source>
        <dbReference type="HAMAP-Rule" id="MF_00154"/>
    </source>
</evidence>
<feature type="chain" id="PRO_0000346033" description="Protoheme IX farnesyltransferase">
    <location>
        <begin position="1"/>
        <end position="300"/>
    </location>
</feature>
<feature type="transmembrane region" description="Helical" evidence="1">
    <location>
        <begin position="24"/>
        <end position="44"/>
    </location>
</feature>
<feature type="transmembrane region" description="Helical" evidence="1">
    <location>
        <begin position="46"/>
        <end position="66"/>
    </location>
</feature>
<feature type="transmembrane region" description="Helical" evidence="1">
    <location>
        <begin position="94"/>
        <end position="114"/>
    </location>
</feature>
<feature type="transmembrane region" description="Helical" evidence="1">
    <location>
        <begin position="118"/>
        <end position="138"/>
    </location>
</feature>
<feature type="transmembrane region" description="Helical" evidence="1">
    <location>
        <begin position="146"/>
        <end position="166"/>
    </location>
</feature>
<feature type="transmembrane region" description="Helical" evidence="1">
    <location>
        <begin position="172"/>
        <end position="192"/>
    </location>
</feature>
<feature type="transmembrane region" description="Helical" evidence="1">
    <location>
        <begin position="224"/>
        <end position="244"/>
    </location>
</feature>
<feature type="transmembrane region" description="Helical" evidence="1">
    <location>
        <begin position="278"/>
        <end position="298"/>
    </location>
</feature>
<dbReference type="EC" id="2.5.1.141" evidence="1"/>
<dbReference type="EMBL" id="CP001025">
    <property type="protein sequence ID" value="ACB65231.1"/>
    <property type="molecule type" value="Genomic_DNA"/>
</dbReference>
<dbReference type="RefSeq" id="WP_012364761.1">
    <property type="nucleotide sequence ID" value="NC_010551.1"/>
</dbReference>
<dbReference type="SMR" id="B1YN86"/>
<dbReference type="KEGG" id="bac:BamMC406_2754"/>
<dbReference type="HOGENOM" id="CLU_029631_0_2_4"/>
<dbReference type="OrthoDB" id="9814417at2"/>
<dbReference type="UniPathway" id="UPA00834">
    <property type="reaction ID" value="UER00712"/>
</dbReference>
<dbReference type="Proteomes" id="UP000001680">
    <property type="component" value="Chromosome 1"/>
</dbReference>
<dbReference type="GO" id="GO:0005886">
    <property type="term" value="C:plasma membrane"/>
    <property type="evidence" value="ECO:0007669"/>
    <property type="project" value="UniProtKB-SubCell"/>
</dbReference>
<dbReference type="GO" id="GO:0008495">
    <property type="term" value="F:protoheme IX farnesyltransferase activity"/>
    <property type="evidence" value="ECO:0007669"/>
    <property type="project" value="UniProtKB-UniRule"/>
</dbReference>
<dbReference type="GO" id="GO:0048034">
    <property type="term" value="P:heme O biosynthetic process"/>
    <property type="evidence" value="ECO:0007669"/>
    <property type="project" value="UniProtKB-UniRule"/>
</dbReference>
<dbReference type="CDD" id="cd13957">
    <property type="entry name" value="PT_UbiA_Cox10"/>
    <property type="match status" value="1"/>
</dbReference>
<dbReference type="Gene3D" id="1.10.357.140">
    <property type="entry name" value="UbiA prenyltransferase"/>
    <property type="match status" value="1"/>
</dbReference>
<dbReference type="HAMAP" id="MF_00154">
    <property type="entry name" value="CyoE_CtaB"/>
    <property type="match status" value="1"/>
</dbReference>
<dbReference type="InterPro" id="IPR006369">
    <property type="entry name" value="Protohaem_IX_farnesylTrfase"/>
</dbReference>
<dbReference type="InterPro" id="IPR000537">
    <property type="entry name" value="UbiA_prenyltransferase"/>
</dbReference>
<dbReference type="InterPro" id="IPR030470">
    <property type="entry name" value="UbiA_prenylTrfase_CS"/>
</dbReference>
<dbReference type="InterPro" id="IPR044878">
    <property type="entry name" value="UbiA_sf"/>
</dbReference>
<dbReference type="NCBIfam" id="TIGR01473">
    <property type="entry name" value="cyoE_ctaB"/>
    <property type="match status" value="1"/>
</dbReference>
<dbReference type="NCBIfam" id="NF003349">
    <property type="entry name" value="PRK04375.1-2"/>
    <property type="match status" value="1"/>
</dbReference>
<dbReference type="PANTHER" id="PTHR43448:SF7">
    <property type="entry name" value="4-HYDROXYBENZOATE SOLANESYLTRANSFERASE"/>
    <property type="match status" value="1"/>
</dbReference>
<dbReference type="PANTHER" id="PTHR43448">
    <property type="entry name" value="PROTOHEME IX FARNESYLTRANSFERASE, MITOCHONDRIAL"/>
    <property type="match status" value="1"/>
</dbReference>
<dbReference type="Pfam" id="PF01040">
    <property type="entry name" value="UbiA"/>
    <property type="match status" value="1"/>
</dbReference>
<dbReference type="PROSITE" id="PS00943">
    <property type="entry name" value="UBIA"/>
    <property type="match status" value="1"/>
</dbReference>
<keyword id="KW-0997">Cell inner membrane</keyword>
<keyword id="KW-1003">Cell membrane</keyword>
<keyword id="KW-0350">Heme biosynthesis</keyword>
<keyword id="KW-0472">Membrane</keyword>
<keyword id="KW-0808">Transferase</keyword>
<keyword id="KW-0812">Transmembrane</keyword>
<keyword id="KW-1133">Transmembrane helix</keyword>